<evidence type="ECO:0000250" key="1"/>
<evidence type="ECO:0000255" key="2"/>
<evidence type="ECO:0000305" key="3"/>
<protein>
    <recommendedName>
        <fullName>Replication-associated protein VP4</fullName>
        <shortName>Rep</shortName>
        <shortName>VP4</shortName>
        <ecNumber>3.1.21.-</ecNumber>
        <ecNumber>6.5.1.1</ecNumber>
    </recommendedName>
</protein>
<comment type="function">
    <text evidence="1">Plays an essential role in viral DNA replication. Binds the origin of replication and cleaves the dsDNA replicative form I (RFI) and becomes covalently bound to it via phosphotyrosine bond, generating the dsDNA replicative form II (RFII). In turn, viral DNA replication initiates at the 3'-OH of the cleavage site. After one round of rolling circle synthesis, protein VP4 is linked to the newly synthesized ssDNA and joins the ends of the displaced strand to generate a circular single-stranded molecule ready to be packed into a virion.</text>
</comment>
<comment type="catalytic activity">
    <reaction>
        <text>ATP + (deoxyribonucleotide)n-3'-hydroxyl + 5'-phospho-(deoxyribonucleotide)m = (deoxyribonucleotide)n+m + AMP + diphosphate.</text>
        <dbReference type="EC" id="6.5.1.1"/>
    </reaction>
</comment>
<comment type="similarity">
    <text evidence="3">Belongs to the microviridae Rep protein family.</text>
</comment>
<organismHost>
    <name type="scientific">Bdellovibrio bacteriovorus</name>
    <dbReference type="NCBI Taxonomy" id="959"/>
</organismHost>
<name>REP_BPPHM</name>
<sequence length="315" mass="37232">MHCIRPIKAGFNATGDIVYSSKKISKELASFAFPCRKCIPCRLNMAREKAIRAYHESQMWDDNIFLTLTYDDEHLKSDRLQWIDFDLFIKRLNEKLNRGLSKENRRPLPYMVTGEYGDKTKRPHWHVLIFNFRPDDAKKHYVTELGEQVYTSEFIRDLWTHGNIEFGSVTLDSASYVARYAAKKLAHGNDQDHDYHPIHNTSKKHAIGKKWIEKYHEQTFSRGYVVLPNGSQGPIPRYYQDWYKKNHPEKWMEYDAKVKLKSKELAEMQSRKDQLDDFANFINYRGGTNYPLSRTQVKLAILKSKFKQLQEKLKL</sequence>
<gene>
    <name type="ORF">ORF4</name>
</gene>
<feature type="chain" id="PRO_0000372064" description="Replication-associated protein VP4">
    <location>
        <begin position="1"/>
        <end position="315"/>
    </location>
</feature>
<feature type="coiled-coil region" evidence="2">
    <location>
        <begin position="253"/>
        <end position="315"/>
    </location>
</feature>
<feature type="active site" description="O-(5'-phospho-DNA)-tyrosine intermediate" evidence="1">
    <location>
        <position position="176"/>
    </location>
</feature>
<feature type="active site" description="O-(5'-phospho-DNA)-tyrosine intermediate" evidence="1">
    <location>
        <position position="180"/>
    </location>
</feature>
<accession>Q9G050</accession>
<reference key="1">
    <citation type="journal article" date="2002" name="J. Bacteriol.">
        <title>Microviridae, a family divided: isolation, characterization, and genome sequence of phiMH2K, a bacteriophage of the obligate intracellular parasitic bacterium Bdellovibrio bacteriovorus.</title>
        <authorList>
            <person name="Brentlinger K.L."/>
            <person name="Hafenstein S."/>
            <person name="Novak C.R."/>
            <person name="Fane B.A."/>
            <person name="Borgon R."/>
            <person name="McKenna R."/>
            <person name="Agbandje-McKenna M."/>
        </authorList>
    </citation>
    <scope>NUCLEOTIDE SEQUENCE [GENOMIC DNA]</scope>
</reference>
<dbReference type="EC" id="3.1.21.-"/>
<dbReference type="EC" id="6.5.1.1"/>
<dbReference type="EMBL" id="AF306496">
    <property type="protein sequence ID" value="AAG45349.1"/>
    <property type="molecule type" value="Genomic_DNA"/>
</dbReference>
<dbReference type="RefSeq" id="NP_073537.1">
    <property type="nucleotide sequence ID" value="NC_002643.1"/>
</dbReference>
<dbReference type="KEGG" id="vg:918747"/>
<dbReference type="OrthoDB" id="15873at10239"/>
<dbReference type="Proteomes" id="UP000002418">
    <property type="component" value="Genome"/>
</dbReference>
<dbReference type="GO" id="GO:0005524">
    <property type="term" value="F:ATP binding"/>
    <property type="evidence" value="ECO:0007669"/>
    <property type="project" value="UniProtKB-KW"/>
</dbReference>
<dbReference type="GO" id="GO:0003910">
    <property type="term" value="F:DNA ligase (ATP) activity"/>
    <property type="evidence" value="ECO:0007669"/>
    <property type="project" value="UniProtKB-EC"/>
</dbReference>
<dbReference type="GO" id="GO:0004519">
    <property type="term" value="F:endonuclease activity"/>
    <property type="evidence" value="ECO:0007669"/>
    <property type="project" value="UniProtKB-KW"/>
</dbReference>
<dbReference type="InterPro" id="IPR056906">
    <property type="entry name" value="ORF2/G2P_dom"/>
</dbReference>
<dbReference type="Pfam" id="PF23343">
    <property type="entry name" value="REP_ORF2-G2P"/>
    <property type="match status" value="1"/>
</dbReference>
<organism>
    <name type="scientific">Bdellovibrio phage phiMH2K</name>
    <name type="common">Bacteriophage phiMH2K</name>
    <dbReference type="NCBI Taxonomy" id="145579"/>
    <lineage>
        <taxon>Viruses</taxon>
        <taxon>Monodnaviria</taxon>
        <taxon>Sangervirae</taxon>
        <taxon>Phixviricota</taxon>
        <taxon>Malgrandaviricetes</taxon>
        <taxon>Petitvirales</taxon>
        <taxon>Microviridae</taxon>
        <taxon>Gokushovirinae</taxon>
        <taxon>Bdellomicrovirus</taxon>
        <taxon>Bdellomicrovirus MH2K</taxon>
    </lineage>
</organism>
<keyword id="KW-0067">ATP-binding</keyword>
<keyword id="KW-0175">Coiled coil</keyword>
<keyword id="KW-0255">Endonuclease</keyword>
<keyword id="KW-0378">Hydrolase</keyword>
<keyword id="KW-0436">Ligase</keyword>
<keyword id="KW-0540">Nuclease</keyword>
<keyword id="KW-0547">Nucleotide-binding</keyword>
<keyword id="KW-1185">Reference proteome</keyword>
<proteinExistence type="inferred from homology"/>